<evidence type="ECO:0000255" key="1">
    <source>
        <dbReference type="HAMAP-Rule" id="MF_01026"/>
    </source>
</evidence>
<reference key="1">
    <citation type="submission" date="2007-04" db="EMBL/GenBank/DDBJ databases">
        <title>Complete sequence of Shewanella putrefaciens CN-32.</title>
        <authorList>
            <consortium name="US DOE Joint Genome Institute"/>
            <person name="Copeland A."/>
            <person name="Lucas S."/>
            <person name="Lapidus A."/>
            <person name="Barry K."/>
            <person name="Detter J.C."/>
            <person name="Glavina del Rio T."/>
            <person name="Hammon N."/>
            <person name="Israni S."/>
            <person name="Dalin E."/>
            <person name="Tice H."/>
            <person name="Pitluck S."/>
            <person name="Chain P."/>
            <person name="Malfatti S."/>
            <person name="Shin M."/>
            <person name="Vergez L."/>
            <person name="Schmutz J."/>
            <person name="Larimer F."/>
            <person name="Land M."/>
            <person name="Hauser L."/>
            <person name="Kyrpides N."/>
            <person name="Mikhailova N."/>
            <person name="Romine M.F."/>
            <person name="Fredrickson J."/>
            <person name="Tiedje J."/>
            <person name="Richardson P."/>
        </authorList>
    </citation>
    <scope>NUCLEOTIDE SEQUENCE [LARGE SCALE GENOMIC DNA]</scope>
    <source>
        <strain>CN-32 / ATCC BAA-453</strain>
    </source>
</reference>
<comment type="function">
    <text evidence="1">Catalyzes the isomerization between 2-isopropylmalate and 3-isopropylmalate, via the formation of 2-isopropylmaleate.</text>
</comment>
<comment type="catalytic activity">
    <reaction evidence="1">
        <text>(2R,3S)-3-isopropylmalate = (2S)-2-isopropylmalate</text>
        <dbReference type="Rhea" id="RHEA:32287"/>
        <dbReference type="ChEBI" id="CHEBI:1178"/>
        <dbReference type="ChEBI" id="CHEBI:35121"/>
        <dbReference type="EC" id="4.2.1.33"/>
    </reaction>
</comment>
<comment type="cofactor">
    <cofactor evidence="1">
        <name>[4Fe-4S] cluster</name>
        <dbReference type="ChEBI" id="CHEBI:49883"/>
    </cofactor>
    <text evidence="1">Binds 1 [4Fe-4S] cluster per subunit.</text>
</comment>
<comment type="pathway">
    <text evidence="1">Amino-acid biosynthesis; L-leucine biosynthesis; L-leucine from 3-methyl-2-oxobutanoate: step 2/4.</text>
</comment>
<comment type="subunit">
    <text evidence="1">Heterodimer of LeuC and LeuD.</text>
</comment>
<comment type="similarity">
    <text evidence="1">Belongs to the aconitase/IPM isomerase family. LeuC type 1 subfamily.</text>
</comment>
<protein>
    <recommendedName>
        <fullName evidence="1">3-isopropylmalate dehydratase large subunit</fullName>
        <ecNumber evidence="1">4.2.1.33</ecNumber>
    </recommendedName>
    <alternativeName>
        <fullName evidence="1">Alpha-IPM isomerase</fullName>
        <shortName evidence="1">IPMI</shortName>
    </alternativeName>
    <alternativeName>
        <fullName evidence="1">Isopropylmalate isomerase</fullName>
    </alternativeName>
</protein>
<organism>
    <name type="scientific">Shewanella putrefaciens (strain CN-32 / ATCC BAA-453)</name>
    <dbReference type="NCBI Taxonomy" id="319224"/>
    <lineage>
        <taxon>Bacteria</taxon>
        <taxon>Pseudomonadati</taxon>
        <taxon>Pseudomonadota</taxon>
        <taxon>Gammaproteobacteria</taxon>
        <taxon>Alteromonadales</taxon>
        <taxon>Shewanellaceae</taxon>
        <taxon>Shewanella</taxon>
    </lineage>
</organism>
<name>LEUC_SHEPC</name>
<keyword id="KW-0004">4Fe-4S</keyword>
<keyword id="KW-0028">Amino-acid biosynthesis</keyword>
<keyword id="KW-0100">Branched-chain amino acid biosynthesis</keyword>
<keyword id="KW-0408">Iron</keyword>
<keyword id="KW-0411">Iron-sulfur</keyword>
<keyword id="KW-0432">Leucine biosynthesis</keyword>
<keyword id="KW-0456">Lyase</keyword>
<keyword id="KW-0479">Metal-binding</keyword>
<feature type="chain" id="PRO_1000063606" description="3-isopropylmalate dehydratase large subunit">
    <location>
        <begin position="1"/>
        <end position="474"/>
    </location>
</feature>
<feature type="binding site" evidence="1">
    <location>
        <position position="355"/>
    </location>
    <ligand>
        <name>[4Fe-4S] cluster</name>
        <dbReference type="ChEBI" id="CHEBI:49883"/>
    </ligand>
</feature>
<feature type="binding site" evidence="1">
    <location>
        <position position="415"/>
    </location>
    <ligand>
        <name>[4Fe-4S] cluster</name>
        <dbReference type="ChEBI" id="CHEBI:49883"/>
    </ligand>
</feature>
<feature type="binding site" evidence="1">
    <location>
        <position position="418"/>
    </location>
    <ligand>
        <name>[4Fe-4S] cluster</name>
        <dbReference type="ChEBI" id="CHEBI:49883"/>
    </ligand>
</feature>
<sequence>MTTVPKNAVAKTLYQKVWDAHVVATPEGEAPIIYVDRHLVHEVTSPQAFSGLKVAGRKLRAPEKTFATMDHNTSTRSASLDALSPMARTQVETLAQNCKDFGVRLYDIHHPNQGIVHVMGPELGITFPGTVIVCGDSHTATHGAFGALAFGIGTSEVEHVLATQTLRQLKAKTMKIEVRGHVSDGVTAKDIVLAIIGKIGMDGGTGYVVEFCGEAIEALSMEGRMTVCNMAIEMGAKAGMVAPDQTTFDYLAGREFAPKGEDWAEAVAYWQAIKTDDGAVFDAVVELDAADIAPQLTWGTNPGQVVAIDGKVPNPLDEANPSTRASMEKALEYIGLSAGTPMTDISINKVFIGSCTNSRIEDLRSAAVHAKGRKVASGVTAIVVPGSGQVKAQAEAEGLDKIFIEAGFEWRLPGCSMCLAMNDDRLEAGDRCASTSNRNFEGRQGRGSRTHLVSPAMAAAAAVAGHFVDIRKPY</sequence>
<proteinExistence type="inferred from homology"/>
<accession>A4Y2M2</accession>
<dbReference type="EC" id="4.2.1.33" evidence="1"/>
<dbReference type="EMBL" id="CP000681">
    <property type="protein sequence ID" value="ABP74205.1"/>
    <property type="molecule type" value="Genomic_DNA"/>
</dbReference>
<dbReference type="SMR" id="A4Y2M2"/>
<dbReference type="STRING" id="319224.Sputcn32_0473"/>
<dbReference type="KEGG" id="spc:Sputcn32_0473"/>
<dbReference type="eggNOG" id="COG0065">
    <property type="taxonomic scope" value="Bacteria"/>
</dbReference>
<dbReference type="HOGENOM" id="CLU_006714_3_4_6"/>
<dbReference type="UniPathway" id="UPA00048">
    <property type="reaction ID" value="UER00071"/>
</dbReference>
<dbReference type="GO" id="GO:0003861">
    <property type="term" value="F:3-isopropylmalate dehydratase activity"/>
    <property type="evidence" value="ECO:0007669"/>
    <property type="project" value="UniProtKB-UniRule"/>
</dbReference>
<dbReference type="GO" id="GO:0051539">
    <property type="term" value="F:4 iron, 4 sulfur cluster binding"/>
    <property type="evidence" value="ECO:0007669"/>
    <property type="project" value="UniProtKB-KW"/>
</dbReference>
<dbReference type="GO" id="GO:0046872">
    <property type="term" value="F:metal ion binding"/>
    <property type="evidence" value="ECO:0007669"/>
    <property type="project" value="UniProtKB-KW"/>
</dbReference>
<dbReference type="GO" id="GO:0009098">
    <property type="term" value="P:L-leucine biosynthetic process"/>
    <property type="evidence" value="ECO:0007669"/>
    <property type="project" value="UniProtKB-UniRule"/>
</dbReference>
<dbReference type="CDD" id="cd01583">
    <property type="entry name" value="IPMI"/>
    <property type="match status" value="1"/>
</dbReference>
<dbReference type="FunFam" id="3.30.499.10:FF:000006">
    <property type="entry name" value="3-isopropylmalate dehydratase large subunit"/>
    <property type="match status" value="1"/>
</dbReference>
<dbReference type="FunFam" id="3.30.499.10:FF:000007">
    <property type="entry name" value="3-isopropylmalate dehydratase large subunit"/>
    <property type="match status" value="1"/>
</dbReference>
<dbReference type="Gene3D" id="3.30.499.10">
    <property type="entry name" value="Aconitase, domain 3"/>
    <property type="match status" value="2"/>
</dbReference>
<dbReference type="HAMAP" id="MF_01026">
    <property type="entry name" value="LeuC_type1"/>
    <property type="match status" value="1"/>
</dbReference>
<dbReference type="InterPro" id="IPR004430">
    <property type="entry name" value="3-IsopropMal_deHydase_lsu"/>
</dbReference>
<dbReference type="InterPro" id="IPR015931">
    <property type="entry name" value="Acnase/IPM_dHydase_lsu_aba_1/3"/>
</dbReference>
<dbReference type="InterPro" id="IPR001030">
    <property type="entry name" value="Acoase/IPM_deHydtase_lsu_aba"/>
</dbReference>
<dbReference type="InterPro" id="IPR018136">
    <property type="entry name" value="Aconitase_4Fe-4S_BS"/>
</dbReference>
<dbReference type="InterPro" id="IPR036008">
    <property type="entry name" value="Aconitase_4Fe-4S_dom"/>
</dbReference>
<dbReference type="InterPro" id="IPR050067">
    <property type="entry name" value="IPM_dehydratase_rel_enz"/>
</dbReference>
<dbReference type="InterPro" id="IPR033941">
    <property type="entry name" value="IPMI_cat"/>
</dbReference>
<dbReference type="NCBIfam" id="TIGR00170">
    <property type="entry name" value="leuC"/>
    <property type="match status" value="1"/>
</dbReference>
<dbReference type="NCBIfam" id="NF004016">
    <property type="entry name" value="PRK05478.1"/>
    <property type="match status" value="1"/>
</dbReference>
<dbReference type="NCBIfam" id="NF009116">
    <property type="entry name" value="PRK12466.1"/>
    <property type="match status" value="1"/>
</dbReference>
<dbReference type="PANTHER" id="PTHR43822:SF9">
    <property type="entry name" value="3-ISOPROPYLMALATE DEHYDRATASE"/>
    <property type="match status" value="1"/>
</dbReference>
<dbReference type="PANTHER" id="PTHR43822">
    <property type="entry name" value="HOMOACONITASE, MITOCHONDRIAL-RELATED"/>
    <property type="match status" value="1"/>
</dbReference>
<dbReference type="Pfam" id="PF00330">
    <property type="entry name" value="Aconitase"/>
    <property type="match status" value="1"/>
</dbReference>
<dbReference type="PRINTS" id="PR00415">
    <property type="entry name" value="ACONITASE"/>
</dbReference>
<dbReference type="SUPFAM" id="SSF53732">
    <property type="entry name" value="Aconitase iron-sulfur domain"/>
    <property type="match status" value="1"/>
</dbReference>
<dbReference type="PROSITE" id="PS00450">
    <property type="entry name" value="ACONITASE_1"/>
    <property type="match status" value="1"/>
</dbReference>
<dbReference type="PROSITE" id="PS01244">
    <property type="entry name" value="ACONITASE_2"/>
    <property type="match status" value="1"/>
</dbReference>
<gene>
    <name evidence="1" type="primary">leuC</name>
    <name type="ordered locus">Sputcn32_0473</name>
</gene>